<gene>
    <name evidence="1" type="primary">nuoB</name>
    <name type="ordered locus">BUAPTUC7_154</name>
</gene>
<keyword id="KW-0004">4Fe-4S</keyword>
<keyword id="KW-1003">Cell membrane</keyword>
<keyword id="KW-0408">Iron</keyword>
<keyword id="KW-0411">Iron-sulfur</keyword>
<keyword id="KW-0472">Membrane</keyword>
<keyword id="KW-0479">Metal-binding</keyword>
<keyword id="KW-0520">NAD</keyword>
<keyword id="KW-0874">Quinone</keyword>
<keyword id="KW-1278">Translocase</keyword>
<keyword id="KW-0813">Transport</keyword>
<keyword id="KW-0830">Ubiquinone</keyword>
<dbReference type="EC" id="7.1.1.-" evidence="1"/>
<dbReference type="EMBL" id="CP001158">
    <property type="protein sequence ID" value="ACL29975.1"/>
    <property type="molecule type" value="Genomic_DNA"/>
</dbReference>
<dbReference type="RefSeq" id="WP_009874111.1">
    <property type="nucleotide sequence ID" value="NC_011834.1"/>
</dbReference>
<dbReference type="SMR" id="B8D760"/>
<dbReference type="KEGG" id="bau:BUAPTUC7_154"/>
<dbReference type="HOGENOM" id="CLU_055737_7_3_6"/>
<dbReference type="GO" id="GO:0005886">
    <property type="term" value="C:plasma membrane"/>
    <property type="evidence" value="ECO:0007669"/>
    <property type="project" value="UniProtKB-SubCell"/>
</dbReference>
<dbReference type="GO" id="GO:0045271">
    <property type="term" value="C:respiratory chain complex I"/>
    <property type="evidence" value="ECO:0007669"/>
    <property type="project" value="TreeGrafter"/>
</dbReference>
<dbReference type="GO" id="GO:0051539">
    <property type="term" value="F:4 iron, 4 sulfur cluster binding"/>
    <property type="evidence" value="ECO:0007669"/>
    <property type="project" value="UniProtKB-KW"/>
</dbReference>
<dbReference type="GO" id="GO:0005506">
    <property type="term" value="F:iron ion binding"/>
    <property type="evidence" value="ECO:0007669"/>
    <property type="project" value="UniProtKB-UniRule"/>
</dbReference>
<dbReference type="GO" id="GO:0008137">
    <property type="term" value="F:NADH dehydrogenase (ubiquinone) activity"/>
    <property type="evidence" value="ECO:0007669"/>
    <property type="project" value="InterPro"/>
</dbReference>
<dbReference type="GO" id="GO:0050136">
    <property type="term" value="F:NADH:ubiquinone reductase (non-electrogenic) activity"/>
    <property type="evidence" value="ECO:0007669"/>
    <property type="project" value="UniProtKB-UniRule"/>
</dbReference>
<dbReference type="GO" id="GO:0048038">
    <property type="term" value="F:quinone binding"/>
    <property type="evidence" value="ECO:0007669"/>
    <property type="project" value="UniProtKB-KW"/>
</dbReference>
<dbReference type="GO" id="GO:0009060">
    <property type="term" value="P:aerobic respiration"/>
    <property type="evidence" value="ECO:0007669"/>
    <property type="project" value="TreeGrafter"/>
</dbReference>
<dbReference type="GO" id="GO:0015990">
    <property type="term" value="P:electron transport coupled proton transport"/>
    <property type="evidence" value="ECO:0007669"/>
    <property type="project" value="TreeGrafter"/>
</dbReference>
<dbReference type="FunFam" id="3.40.50.12280:FF:000002">
    <property type="entry name" value="NADH-quinone oxidoreductase subunit B"/>
    <property type="match status" value="1"/>
</dbReference>
<dbReference type="Gene3D" id="3.40.50.12280">
    <property type="match status" value="1"/>
</dbReference>
<dbReference type="HAMAP" id="MF_01356">
    <property type="entry name" value="NDH1_NuoB"/>
    <property type="match status" value="1"/>
</dbReference>
<dbReference type="InterPro" id="IPR006137">
    <property type="entry name" value="NADH_UbQ_OxRdtase-like_20kDa"/>
</dbReference>
<dbReference type="InterPro" id="IPR006138">
    <property type="entry name" value="NADH_UQ_OxRdtase_20Kd_su"/>
</dbReference>
<dbReference type="NCBIfam" id="TIGR01957">
    <property type="entry name" value="nuoB_fam"/>
    <property type="match status" value="1"/>
</dbReference>
<dbReference type="NCBIfam" id="NF005012">
    <property type="entry name" value="PRK06411.1"/>
    <property type="match status" value="1"/>
</dbReference>
<dbReference type="PANTHER" id="PTHR11995">
    <property type="entry name" value="NADH DEHYDROGENASE"/>
    <property type="match status" value="1"/>
</dbReference>
<dbReference type="PANTHER" id="PTHR11995:SF14">
    <property type="entry name" value="NADH DEHYDROGENASE [UBIQUINONE] IRON-SULFUR PROTEIN 7, MITOCHONDRIAL"/>
    <property type="match status" value="1"/>
</dbReference>
<dbReference type="Pfam" id="PF01058">
    <property type="entry name" value="Oxidored_q6"/>
    <property type="match status" value="1"/>
</dbReference>
<dbReference type="SUPFAM" id="SSF56770">
    <property type="entry name" value="HydA/Nqo6-like"/>
    <property type="match status" value="1"/>
</dbReference>
<dbReference type="PROSITE" id="PS01150">
    <property type="entry name" value="COMPLEX1_20K"/>
    <property type="match status" value="1"/>
</dbReference>
<proteinExistence type="inferred from homology"/>
<name>NUOB_BUCAT</name>
<organism>
    <name type="scientific">Buchnera aphidicola subsp. Acyrthosiphon pisum (strain Tuc7)</name>
    <dbReference type="NCBI Taxonomy" id="561501"/>
    <lineage>
        <taxon>Bacteria</taxon>
        <taxon>Pseudomonadati</taxon>
        <taxon>Pseudomonadota</taxon>
        <taxon>Gammaproteobacteria</taxon>
        <taxon>Enterobacterales</taxon>
        <taxon>Erwiniaceae</taxon>
        <taxon>Buchnera</taxon>
    </lineage>
</organism>
<protein>
    <recommendedName>
        <fullName evidence="1">NADH-quinone oxidoreductase subunit B</fullName>
        <ecNumber evidence="1">7.1.1.-</ecNumber>
    </recommendedName>
    <alternativeName>
        <fullName evidence="1">NADH dehydrogenase I subunit B</fullName>
    </alternativeName>
    <alternativeName>
        <fullName evidence="1">NDH-1 subunit B</fullName>
    </alternativeName>
</protein>
<evidence type="ECO:0000255" key="1">
    <source>
        <dbReference type="HAMAP-Rule" id="MF_01356"/>
    </source>
</evidence>
<accession>B8D760</accession>
<sequence>MNYTLTKADSDNNNKKYPKQTIESVSDPLEEYLKKNIFMGKITQLLHKLVNWGRKNSLWPYNFGLSCCYVEMVSAFTSVHDVARFGSEVLRASPRQADVMVIAGTPFIKMAPVIQRLYDQMLEPKWVISMGACANSGGMYDIYSVVQGVDKFLPVDIYIPGCPPRPEAYMQALILLQKLINEERRPLSWVIGEQGVYHKKMPSERVQKRSKRINIINLSTSEKI</sequence>
<comment type="function">
    <text evidence="1">NDH-1 shuttles electrons from NADH, via FMN and iron-sulfur (Fe-S) centers, to quinones in the respiratory chain. The immediate electron acceptor for the enzyme in this species is believed to be ubiquinone. Couples the redox reaction to proton translocation (for every two electrons transferred, four hydrogen ions are translocated across the cytoplasmic membrane), and thus conserves the redox energy in a proton gradient.</text>
</comment>
<comment type="catalytic activity">
    <reaction evidence="1">
        <text>a quinone + NADH + 5 H(+)(in) = a quinol + NAD(+) + 4 H(+)(out)</text>
        <dbReference type="Rhea" id="RHEA:57888"/>
        <dbReference type="ChEBI" id="CHEBI:15378"/>
        <dbReference type="ChEBI" id="CHEBI:24646"/>
        <dbReference type="ChEBI" id="CHEBI:57540"/>
        <dbReference type="ChEBI" id="CHEBI:57945"/>
        <dbReference type="ChEBI" id="CHEBI:132124"/>
    </reaction>
</comment>
<comment type="cofactor">
    <cofactor evidence="1">
        <name>[4Fe-4S] cluster</name>
        <dbReference type="ChEBI" id="CHEBI:49883"/>
    </cofactor>
    <text evidence="1">Binds 1 [4Fe-4S] cluster.</text>
</comment>
<comment type="subunit">
    <text evidence="1">NDH-1 is composed of 13 different subunits. Subunits NuoB, CD, E, F, and G constitute the peripheral sector of the complex.</text>
</comment>
<comment type="subcellular location">
    <subcellularLocation>
        <location evidence="1">Cell membrane</location>
        <topology evidence="1">Peripheral membrane protein</topology>
        <orientation evidence="1">Cytoplasmic side</orientation>
    </subcellularLocation>
</comment>
<comment type="similarity">
    <text evidence="1">Belongs to the complex I 20 kDa subunit family.</text>
</comment>
<feature type="chain" id="PRO_0000376157" description="NADH-quinone oxidoreductase subunit B">
    <location>
        <begin position="1"/>
        <end position="224"/>
    </location>
</feature>
<feature type="binding site" evidence="1">
    <location>
        <position position="67"/>
    </location>
    <ligand>
        <name>[4Fe-4S] cluster</name>
        <dbReference type="ChEBI" id="CHEBI:49883"/>
    </ligand>
</feature>
<feature type="binding site" evidence="1">
    <location>
        <position position="68"/>
    </location>
    <ligand>
        <name>[4Fe-4S] cluster</name>
        <dbReference type="ChEBI" id="CHEBI:49883"/>
    </ligand>
</feature>
<feature type="binding site" evidence="1">
    <location>
        <position position="133"/>
    </location>
    <ligand>
        <name>[4Fe-4S] cluster</name>
        <dbReference type="ChEBI" id="CHEBI:49883"/>
    </ligand>
</feature>
<feature type="binding site" evidence="1">
    <location>
        <position position="162"/>
    </location>
    <ligand>
        <name>[4Fe-4S] cluster</name>
        <dbReference type="ChEBI" id="CHEBI:49883"/>
    </ligand>
</feature>
<reference key="1">
    <citation type="journal article" date="2009" name="Science">
        <title>The dynamics and time scale of ongoing genomic erosion in symbiotic bacteria.</title>
        <authorList>
            <person name="Moran N.A."/>
            <person name="McLaughlin H.J."/>
            <person name="Sorek R."/>
        </authorList>
    </citation>
    <scope>NUCLEOTIDE SEQUENCE [LARGE SCALE GENOMIC DNA]</scope>
    <source>
        <strain>Tuc7</strain>
    </source>
</reference>